<protein>
    <recommendedName>
        <fullName evidence="1">Putative glutamate--cysteine ligase 2</fullName>
        <ecNumber evidence="1">6.3.2.2</ecNumber>
    </recommendedName>
    <alternativeName>
        <fullName evidence="1">Gamma-glutamylcysteine synthetase 2</fullName>
        <shortName evidence="1">GCS 2</shortName>
        <shortName evidence="1">Gamma-GCS 2</shortName>
    </alternativeName>
</protein>
<dbReference type="EC" id="6.3.2.2" evidence="1"/>
<dbReference type="EMBL" id="CP001144">
    <property type="protein sequence ID" value="ACH76073.1"/>
    <property type="molecule type" value="Genomic_DNA"/>
</dbReference>
<dbReference type="RefSeq" id="WP_001196902.1">
    <property type="nucleotide sequence ID" value="NC_011205.1"/>
</dbReference>
<dbReference type="SMR" id="B5FMI4"/>
<dbReference type="KEGG" id="sed:SeD_A0679"/>
<dbReference type="HOGENOM" id="CLU_044848_1_1_6"/>
<dbReference type="Proteomes" id="UP000008322">
    <property type="component" value="Chromosome"/>
</dbReference>
<dbReference type="GO" id="GO:0005524">
    <property type="term" value="F:ATP binding"/>
    <property type="evidence" value="ECO:0007669"/>
    <property type="project" value="UniProtKB-KW"/>
</dbReference>
<dbReference type="GO" id="GO:0004357">
    <property type="term" value="F:glutamate-cysteine ligase activity"/>
    <property type="evidence" value="ECO:0007669"/>
    <property type="project" value="UniProtKB-EC"/>
</dbReference>
<dbReference type="GO" id="GO:0042398">
    <property type="term" value="P:modified amino acid biosynthetic process"/>
    <property type="evidence" value="ECO:0007669"/>
    <property type="project" value="InterPro"/>
</dbReference>
<dbReference type="FunFam" id="3.30.590.20:FF:000002">
    <property type="entry name" value="Putative glutamate--cysteine ligase 2"/>
    <property type="match status" value="1"/>
</dbReference>
<dbReference type="Gene3D" id="3.30.590.20">
    <property type="match status" value="1"/>
</dbReference>
<dbReference type="HAMAP" id="MF_01609">
    <property type="entry name" value="Glu_cys_ligase_2"/>
    <property type="match status" value="1"/>
</dbReference>
<dbReference type="InterPro" id="IPR050141">
    <property type="entry name" value="GCL_type2/YbdK_subfam"/>
</dbReference>
<dbReference type="InterPro" id="IPR006336">
    <property type="entry name" value="GCS2"/>
</dbReference>
<dbReference type="InterPro" id="IPR014746">
    <property type="entry name" value="Gln_synth/guanido_kin_cat_dom"/>
</dbReference>
<dbReference type="InterPro" id="IPR011793">
    <property type="entry name" value="YbdK"/>
</dbReference>
<dbReference type="NCBIfam" id="TIGR02050">
    <property type="entry name" value="gshA_cyan_rel"/>
    <property type="match status" value="1"/>
</dbReference>
<dbReference type="NCBIfam" id="NF010040">
    <property type="entry name" value="PRK13516.1"/>
    <property type="match status" value="1"/>
</dbReference>
<dbReference type="PANTHER" id="PTHR36510">
    <property type="entry name" value="GLUTAMATE--CYSTEINE LIGASE 2-RELATED"/>
    <property type="match status" value="1"/>
</dbReference>
<dbReference type="PANTHER" id="PTHR36510:SF1">
    <property type="entry name" value="GLUTAMATE--CYSTEINE LIGASE 2-RELATED"/>
    <property type="match status" value="1"/>
</dbReference>
<dbReference type="Pfam" id="PF04107">
    <property type="entry name" value="GCS2"/>
    <property type="match status" value="1"/>
</dbReference>
<dbReference type="SUPFAM" id="SSF55931">
    <property type="entry name" value="Glutamine synthetase/guanido kinase"/>
    <property type="match status" value="1"/>
</dbReference>
<gene>
    <name type="primary">ybdK</name>
    <name type="ordered locus">SeD_A0679</name>
</gene>
<name>GCS2_SALDC</name>
<feature type="chain" id="PRO_1000148228" description="Putative glutamate--cysteine ligase 2">
    <location>
        <begin position="1"/>
        <end position="372"/>
    </location>
</feature>
<reference key="1">
    <citation type="journal article" date="2011" name="J. Bacteriol.">
        <title>Comparative genomics of 28 Salmonella enterica isolates: evidence for CRISPR-mediated adaptive sublineage evolution.</title>
        <authorList>
            <person name="Fricke W.F."/>
            <person name="Mammel M.K."/>
            <person name="McDermott P.F."/>
            <person name="Tartera C."/>
            <person name="White D.G."/>
            <person name="Leclerc J.E."/>
            <person name="Ravel J."/>
            <person name="Cebula T.A."/>
        </authorList>
    </citation>
    <scope>NUCLEOTIDE SEQUENCE [LARGE SCALE GENOMIC DNA]</scope>
    <source>
        <strain>CT_02021853</strain>
    </source>
</reference>
<comment type="function">
    <text evidence="1">ATP-dependent carboxylate-amine ligase which exhibits weak glutamate--cysteine ligase activity.</text>
</comment>
<comment type="catalytic activity">
    <reaction evidence="1">
        <text>L-cysteine + L-glutamate + ATP = gamma-L-glutamyl-L-cysteine + ADP + phosphate + H(+)</text>
        <dbReference type="Rhea" id="RHEA:13285"/>
        <dbReference type="ChEBI" id="CHEBI:15378"/>
        <dbReference type="ChEBI" id="CHEBI:29985"/>
        <dbReference type="ChEBI" id="CHEBI:30616"/>
        <dbReference type="ChEBI" id="CHEBI:35235"/>
        <dbReference type="ChEBI" id="CHEBI:43474"/>
        <dbReference type="ChEBI" id="CHEBI:58173"/>
        <dbReference type="ChEBI" id="CHEBI:456216"/>
        <dbReference type="EC" id="6.3.2.2"/>
    </reaction>
</comment>
<comment type="subunit">
    <text evidence="1">Homodimer.</text>
</comment>
<comment type="similarity">
    <text evidence="1">Belongs to the glutamate--cysteine ligase type 2 family. YbdK subfamily.</text>
</comment>
<organism>
    <name type="scientific">Salmonella dublin (strain CT_02021853)</name>
    <dbReference type="NCBI Taxonomy" id="439851"/>
    <lineage>
        <taxon>Bacteria</taxon>
        <taxon>Pseudomonadati</taxon>
        <taxon>Pseudomonadota</taxon>
        <taxon>Gammaproteobacteria</taxon>
        <taxon>Enterobacterales</taxon>
        <taxon>Enterobacteriaceae</taxon>
        <taxon>Salmonella</taxon>
    </lineage>
</organism>
<keyword id="KW-0067">ATP-binding</keyword>
<keyword id="KW-0436">Ligase</keyword>
<keyword id="KW-0547">Nucleotide-binding</keyword>
<proteinExistence type="inferred from homology"/>
<sequence>MALNDFHVSEPYTLGIELEMQVINPPGYDLSQDSSTLIDAVKPQLTAGEIKHDITESMLEMATGVCRDIDQAAAQLSAMQHVILQAASEHHLGICGGGTHPFQKWQRQEVCDNERYQRTLENFGYLIQQATVFGQHVHVGCANGDDAIYLLHGLSHFVPHFIALSAASPHMQGSDTRFACARLNIFSAFPDNGPMPWVSNWQEFAGLFRRLSYTTMIDSIKDLHWDIRPNPAFGTVEVRVMDTPLTLDHAINMAGLIQATAHWLLTERPFKPQEQDYLLYKFNRFQACRYGLEGVITDAYTGDRRRLADDTLRLLDNVTPSARKLGADSAIDALRLQVKKGGNEAQYMREFIADGGSLIGLVQKHCEIWAGQ</sequence>
<accession>B5FMI4</accession>
<evidence type="ECO:0000255" key="1">
    <source>
        <dbReference type="HAMAP-Rule" id="MF_01609"/>
    </source>
</evidence>